<accession>B2I916</accession>
<name>PSRP_XYLF2</name>
<dbReference type="EC" id="2.7.11.33" evidence="1"/>
<dbReference type="EC" id="2.7.4.28" evidence="1"/>
<dbReference type="EMBL" id="CP001011">
    <property type="protein sequence ID" value="ACB91993.1"/>
    <property type="molecule type" value="Genomic_DNA"/>
</dbReference>
<dbReference type="RefSeq" id="WP_004087371.1">
    <property type="nucleotide sequence ID" value="NC_010577.1"/>
</dbReference>
<dbReference type="SMR" id="B2I916"/>
<dbReference type="KEGG" id="xfn:XfasM23_0549"/>
<dbReference type="HOGENOM" id="CLU_046206_1_0_6"/>
<dbReference type="Proteomes" id="UP000001698">
    <property type="component" value="Chromosome"/>
</dbReference>
<dbReference type="GO" id="GO:0043531">
    <property type="term" value="F:ADP binding"/>
    <property type="evidence" value="ECO:0007669"/>
    <property type="project" value="UniProtKB-UniRule"/>
</dbReference>
<dbReference type="GO" id="GO:0005524">
    <property type="term" value="F:ATP binding"/>
    <property type="evidence" value="ECO:0007669"/>
    <property type="project" value="InterPro"/>
</dbReference>
<dbReference type="GO" id="GO:0016776">
    <property type="term" value="F:phosphotransferase activity, phosphate group as acceptor"/>
    <property type="evidence" value="ECO:0007669"/>
    <property type="project" value="UniProtKB-UniRule"/>
</dbReference>
<dbReference type="GO" id="GO:0004674">
    <property type="term" value="F:protein serine/threonine kinase activity"/>
    <property type="evidence" value="ECO:0007669"/>
    <property type="project" value="UniProtKB-UniRule"/>
</dbReference>
<dbReference type="HAMAP" id="MF_01062">
    <property type="entry name" value="PSRP"/>
    <property type="match status" value="1"/>
</dbReference>
<dbReference type="InterPro" id="IPR005177">
    <property type="entry name" value="Kinase-pyrophosphorylase"/>
</dbReference>
<dbReference type="InterPro" id="IPR026530">
    <property type="entry name" value="PSRP"/>
</dbReference>
<dbReference type="NCBIfam" id="NF003742">
    <property type="entry name" value="PRK05339.1"/>
    <property type="match status" value="1"/>
</dbReference>
<dbReference type="PANTHER" id="PTHR31756">
    <property type="entry name" value="PYRUVATE, PHOSPHATE DIKINASE REGULATORY PROTEIN 1, CHLOROPLASTIC"/>
    <property type="match status" value="1"/>
</dbReference>
<dbReference type="PANTHER" id="PTHR31756:SF3">
    <property type="entry name" value="PYRUVATE, PHOSPHATE DIKINASE REGULATORY PROTEIN 1, CHLOROPLASTIC"/>
    <property type="match status" value="1"/>
</dbReference>
<dbReference type="Pfam" id="PF03618">
    <property type="entry name" value="Kinase-PPPase"/>
    <property type="match status" value="1"/>
</dbReference>
<protein>
    <recommendedName>
        <fullName evidence="1">Putative phosphoenolpyruvate synthase regulatory protein</fullName>
        <shortName evidence="1">PEP synthase regulatory protein</shortName>
        <shortName evidence="1">PSRP</shortName>
        <ecNumber evidence="1">2.7.11.33</ecNumber>
        <ecNumber evidence="1">2.7.4.28</ecNumber>
    </recommendedName>
    <alternativeName>
        <fullName evidence="1">Pyruvate, water dikinase regulatory protein</fullName>
    </alternativeName>
</protein>
<feature type="chain" id="PRO_1000136505" description="Putative phosphoenolpyruvate synthase regulatory protein">
    <location>
        <begin position="1"/>
        <end position="273"/>
    </location>
</feature>
<feature type="binding site" evidence="1">
    <location>
        <begin position="153"/>
        <end position="160"/>
    </location>
    <ligand>
        <name>ADP</name>
        <dbReference type="ChEBI" id="CHEBI:456216"/>
    </ligand>
</feature>
<reference key="1">
    <citation type="journal article" date="2010" name="J. Bacteriol.">
        <title>Whole genome sequences of two Xylella fastidiosa strains (M12 and M23) causing almond leaf scorch disease in California.</title>
        <authorList>
            <person name="Chen J."/>
            <person name="Xie G."/>
            <person name="Han S."/>
            <person name="Chertkov O."/>
            <person name="Sims D."/>
            <person name="Civerolo E.L."/>
        </authorList>
    </citation>
    <scope>NUCLEOTIDE SEQUENCE [LARGE SCALE GENOMIC DNA]</scope>
    <source>
        <strain>M23</strain>
    </source>
</reference>
<evidence type="ECO:0000255" key="1">
    <source>
        <dbReference type="HAMAP-Rule" id="MF_01062"/>
    </source>
</evidence>
<keyword id="KW-0418">Kinase</keyword>
<keyword id="KW-0547">Nucleotide-binding</keyword>
<keyword id="KW-0723">Serine/threonine-protein kinase</keyword>
<keyword id="KW-0808">Transferase</keyword>
<proteinExistence type="inferred from homology"/>
<sequence>MSTIRPVFYVSDGTGITAETIGHSLLTQFSGFTFVAERMVFIDDAEKARDASQRILAASERYRVRPIVVNSCVNPYLSVILAESGALMLDVFAPFIGLLEHELNTSRHSCVGRAHGMVDFETYHRRINAMNFALAHDDGVAASYDEAEVILVAVSRAGKTPTCIYLALHYGIRAANYPLIDEDLNSDQLPLRLRPYRKKLFGLTINPERLQQIRQERRPNSRYAALDTCKREVAAAEQMFSAERITTLSTTHTSIEEISSKVLVTLGLQREMF</sequence>
<comment type="function">
    <text evidence="1">Bifunctional serine/threonine kinase and phosphorylase involved in the regulation of the phosphoenolpyruvate synthase (PEPS) by catalyzing its phosphorylation/dephosphorylation.</text>
</comment>
<comment type="catalytic activity">
    <reaction evidence="1">
        <text>[pyruvate, water dikinase] + ADP = [pyruvate, water dikinase]-phosphate + AMP + H(+)</text>
        <dbReference type="Rhea" id="RHEA:46020"/>
        <dbReference type="Rhea" id="RHEA-COMP:11425"/>
        <dbReference type="Rhea" id="RHEA-COMP:11426"/>
        <dbReference type="ChEBI" id="CHEBI:15378"/>
        <dbReference type="ChEBI" id="CHEBI:43176"/>
        <dbReference type="ChEBI" id="CHEBI:68546"/>
        <dbReference type="ChEBI" id="CHEBI:456215"/>
        <dbReference type="ChEBI" id="CHEBI:456216"/>
        <dbReference type="EC" id="2.7.11.33"/>
    </reaction>
</comment>
<comment type="catalytic activity">
    <reaction evidence="1">
        <text>[pyruvate, water dikinase]-phosphate + phosphate + H(+) = [pyruvate, water dikinase] + diphosphate</text>
        <dbReference type="Rhea" id="RHEA:48580"/>
        <dbReference type="Rhea" id="RHEA-COMP:11425"/>
        <dbReference type="Rhea" id="RHEA-COMP:11426"/>
        <dbReference type="ChEBI" id="CHEBI:15378"/>
        <dbReference type="ChEBI" id="CHEBI:33019"/>
        <dbReference type="ChEBI" id="CHEBI:43176"/>
        <dbReference type="ChEBI" id="CHEBI:43474"/>
        <dbReference type="ChEBI" id="CHEBI:68546"/>
        <dbReference type="EC" id="2.7.4.28"/>
    </reaction>
</comment>
<comment type="similarity">
    <text evidence="1">Belongs to the pyruvate, phosphate/water dikinase regulatory protein family. PSRP subfamily.</text>
</comment>
<gene>
    <name type="ordered locus">XfasM23_0549</name>
</gene>
<organism>
    <name type="scientific">Xylella fastidiosa (strain M23)</name>
    <dbReference type="NCBI Taxonomy" id="405441"/>
    <lineage>
        <taxon>Bacteria</taxon>
        <taxon>Pseudomonadati</taxon>
        <taxon>Pseudomonadota</taxon>
        <taxon>Gammaproteobacteria</taxon>
        <taxon>Lysobacterales</taxon>
        <taxon>Lysobacteraceae</taxon>
        <taxon>Xylella</taxon>
    </lineage>
</organism>